<proteinExistence type="evidence at protein level"/>
<protein>
    <recommendedName>
        <fullName>Cyclopeptide F</fullName>
    </recommendedName>
</protein>
<sequence length="9" mass="978">PGMGIYLPM</sequence>
<name>CYCLF_ANNCH</name>
<feature type="peptide" id="PRO_0000253928" description="Cyclopeptide F" evidence="1">
    <location>
        <begin position="1"/>
        <end position="9"/>
    </location>
</feature>
<feature type="cross-link" description="Cyclopeptide (Pro-Met)">
    <location>
        <begin position="1"/>
        <end position="9"/>
    </location>
</feature>
<evidence type="ECO:0000269" key="1">
    <source>
    </source>
</evidence>
<evidence type="ECO:0000305" key="2"/>
<comment type="function">
    <text evidence="1">Probably participates in a plant defense mechanism. Has cytotoxic activity against human nasopharyngeal carcinoma with an IC(50) of 60 nM.</text>
</comment>
<comment type="PTM">
    <text evidence="1">This is a cyclic peptide.</text>
</comment>
<comment type="mass spectrometry" mass="960.0" method="Electrospray" evidence="1"/>
<reference evidence="2" key="1">
    <citation type="journal article" date="2005" name="Phytochemistry">
        <title>Two cyclopeptides from the seeds of Annona cherimola.</title>
        <authorList>
            <person name="Wele A."/>
            <person name="Zhang Y."/>
            <person name="Brouard J.-P."/>
            <person name="Pousset J.-L."/>
            <person name="Bodo B."/>
        </authorList>
    </citation>
    <scope>PROTEIN SEQUENCE</scope>
    <scope>CROSS-LINK</scope>
    <scope>FUNCTION</scope>
    <scope>MASS SPECTROMETRY</scope>
    <source>
        <tissue evidence="1">Seed</tissue>
    </source>
</reference>
<keyword id="KW-0903">Direct protein sequencing</keyword>
<keyword id="KW-0611">Plant defense</keyword>
<accession>P85002</accession>
<dbReference type="GO" id="GO:0006952">
    <property type="term" value="P:defense response"/>
    <property type="evidence" value="ECO:0000314"/>
    <property type="project" value="UniProtKB"/>
</dbReference>
<organism>
    <name type="scientific">Annona cherimola</name>
    <name type="common">Custard apple</name>
    <name type="synonym">Cherimoya</name>
    <dbReference type="NCBI Taxonomy" id="49314"/>
    <lineage>
        <taxon>Eukaryota</taxon>
        <taxon>Viridiplantae</taxon>
        <taxon>Streptophyta</taxon>
        <taxon>Embryophyta</taxon>
        <taxon>Tracheophyta</taxon>
        <taxon>Spermatophyta</taxon>
        <taxon>Magnoliopsida</taxon>
        <taxon>Magnoliidae</taxon>
        <taxon>Magnoliales</taxon>
        <taxon>Annonaceae</taxon>
        <taxon>Annonoideae</taxon>
        <taxon>Annoneae</taxon>
        <taxon>Annona</taxon>
    </lineage>
</organism>